<gene>
    <name evidence="1" type="primary">rpmH</name>
    <name type="ordered locus">MHP7448_0678</name>
</gene>
<organism>
    <name type="scientific">Mesomycoplasma hyopneumoniae (strain 7448)</name>
    <name type="common">Mycoplasma hyopneumoniae</name>
    <dbReference type="NCBI Taxonomy" id="262722"/>
    <lineage>
        <taxon>Bacteria</taxon>
        <taxon>Bacillati</taxon>
        <taxon>Mycoplasmatota</taxon>
        <taxon>Mycoplasmoidales</taxon>
        <taxon>Metamycoplasmataceae</taxon>
        <taxon>Mesomycoplasma</taxon>
    </lineage>
</organism>
<comment type="similarity">
    <text evidence="1">Belongs to the bacterial ribosomal protein bL34 family.</text>
</comment>
<feature type="chain" id="PRO_1000013375" description="Large ribosomal subunit protein bL34">
    <location>
        <begin position="1"/>
        <end position="47"/>
    </location>
</feature>
<protein>
    <recommendedName>
        <fullName evidence="1">Large ribosomal subunit protein bL34</fullName>
    </recommendedName>
    <alternativeName>
        <fullName evidence="2">50S ribosomal protein L34</fullName>
    </alternativeName>
</protein>
<evidence type="ECO:0000255" key="1">
    <source>
        <dbReference type="HAMAP-Rule" id="MF_00391"/>
    </source>
</evidence>
<evidence type="ECO:0000305" key="2"/>
<sequence length="47" mass="5523">MKRTYQPNKRKHLKTHGFRARMSTADGRKILAARRAKGRKRLTVSDK</sequence>
<dbReference type="EMBL" id="AE017244">
    <property type="protein sequence ID" value="AAZ54040.1"/>
    <property type="molecule type" value="Genomic_DNA"/>
</dbReference>
<dbReference type="RefSeq" id="WP_011206529.1">
    <property type="nucleotide sequence ID" value="NC_007332.1"/>
</dbReference>
<dbReference type="SMR" id="Q4A749"/>
<dbReference type="GeneID" id="41334980"/>
<dbReference type="KEGG" id="mhp:MHP7448_0678"/>
<dbReference type="HOGENOM" id="CLU_129938_2_0_14"/>
<dbReference type="Proteomes" id="UP000000553">
    <property type="component" value="Chromosome"/>
</dbReference>
<dbReference type="GO" id="GO:1990904">
    <property type="term" value="C:ribonucleoprotein complex"/>
    <property type="evidence" value="ECO:0007669"/>
    <property type="project" value="UniProtKB-KW"/>
</dbReference>
<dbReference type="GO" id="GO:0005840">
    <property type="term" value="C:ribosome"/>
    <property type="evidence" value="ECO:0007669"/>
    <property type="project" value="UniProtKB-KW"/>
</dbReference>
<dbReference type="GO" id="GO:0003735">
    <property type="term" value="F:structural constituent of ribosome"/>
    <property type="evidence" value="ECO:0007669"/>
    <property type="project" value="InterPro"/>
</dbReference>
<dbReference type="GO" id="GO:0006412">
    <property type="term" value="P:translation"/>
    <property type="evidence" value="ECO:0007669"/>
    <property type="project" value="UniProtKB-UniRule"/>
</dbReference>
<dbReference type="FunFam" id="1.10.287.3980:FF:000001">
    <property type="entry name" value="Mitochondrial ribosomal protein L34"/>
    <property type="match status" value="1"/>
</dbReference>
<dbReference type="Gene3D" id="1.10.287.3980">
    <property type="match status" value="1"/>
</dbReference>
<dbReference type="HAMAP" id="MF_00391">
    <property type="entry name" value="Ribosomal_bL34"/>
    <property type="match status" value="1"/>
</dbReference>
<dbReference type="InterPro" id="IPR000271">
    <property type="entry name" value="Ribosomal_bL34"/>
</dbReference>
<dbReference type="InterPro" id="IPR020939">
    <property type="entry name" value="Ribosomal_bL34_CS"/>
</dbReference>
<dbReference type="NCBIfam" id="TIGR01030">
    <property type="entry name" value="rpmH_bact"/>
    <property type="match status" value="1"/>
</dbReference>
<dbReference type="PANTHER" id="PTHR14503:SF4">
    <property type="entry name" value="LARGE RIBOSOMAL SUBUNIT PROTEIN BL34M"/>
    <property type="match status" value="1"/>
</dbReference>
<dbReference type="PANTHER" id="PTHR14503">
    <property type="entry name" value="MITOCHONDRIAL RIBOSOMAL PROTEIN 34 FAMILY MEMBER"/>
    <property type="match status" value="1"/>
</dbReference>
<dbReference type="Pfam" id="PF00468">
    <property type="entry name" value="Ribosomal_L34"/>
    <property type="match status" value="1"/>
</dbReference>
<dbReference type="PROSITE" id="PS00784">
    <property type="entry name" value="RIBOSOMAL_L34"/>
    <property type="match status" value="1"/>
</dbReference>
<reference key="1">
    <citation type="journal article" date="2005" name="J. Bacteriol.">
        <title>Swine and poultry pathogens: the complete genome sequences of two strains of Mycoplasma hyopneumoniae and a strain of Mycoplasma synoviae.</title>
        <authorList>
            <person name="Vasconcelos A.T.R."/>
            <person name="Ferreira H.B."/>
            <person name="Bizarro C.V."/>
            <person name="Bonatto S.L."/>
            <person name="Carvalho M.O."/>
            <person name="Pinto P.M."/>
            <person name="Almeida D.F."/>
            <person name="Almeida L.G.P."/>
            <person name="Almeida R."/>
            <person name="Alves-Junior L."/>
            <person name="Assuncao E.N."/>
            <person name="Azevedo V.A.C."/>
            <person name="Bogo M.R."/>
            <person name="Brigido M.M."/>
            <person name="Brocchi M."/>
            <person name="Burity H.A."/>
            <person name="Camargo A.A."/>
            <person name="Camargo S.S."/>
            <person name="Carepo M.S."/>
            <person name="Carraro D.M."/>
            <person name="de Mattos Cascardo J.C."/>
            <person name="Castro L.A."/>
            <person name="Cavalcanti G."/>
            <person name="Chemale G."/>
            <person name="Collevatti R.G."/>
            <person name="Cunha C.W."/>
            <person name="Dallagiovanna B."/>
            <person name="Dambros B.P."/>
            <person name="Dellagostin O.A."/>
            <person name="Falcao C."/>
            <person name="Fantinatti-Garboggini F."/>
            <person name="Felipe M.S.S."/>
            <person name="Fiorentin L."/>
            <person name="Franco G.R."/>
            <person name="Freitas N.S.A."/>
            <person name="Frias D."/>
            <person name="Grangeiro T.B."/>
            <person name="Grisard E.C."/>
            <person name="Guimaraes C.T."/>
            <person name="Hungria M."/>
            <person name="Jardim S.N."/>
            <person name="Krieger M.A."/>
            <person name="Laurino J.P."/>
            <person name="Lima L.F.A."/>
            <person name="Lopes M.I."/>
            <person name="Loreto E.L.S."/>
            <person name="Madeira H.M.F."/>
            <person name="Manfio G.P."/>
            <person name="Maranhao A.Q."/>
            <person name="Martinkovics C.T."/>
            <person name="Medeiros S.R.B."/>
            <person name="Moreira M.A.M."/>
            <person name="Neiva M."/>
            <person name="Ramalho-Neto C.E."/>
            <person name="Nicolas M.F."/>
            <person name="Oliveira S.C."/>
            <person name="Paixao R.F.C."/>
            <person name="Pedrosa F.O."/>
            <person name="Pena S.D.J."/>
            <person name="Pereira M."/>
            <person name="Pereira-Ferrari L."/>
            <person name="Piffer I."/>
            <person name="Pinto L.S."/>
            <person name="Potrich D.P."/>
            <person name="Salim A.C.M."/>
            <person name="Santos F.R."/>
            <person name="Schmitt R."/>
            <person name="Schneider M.P.C."/>
            <person name="Schrank A."/>
            <person name="Schrank I.S."/>
            <person name="Schuck A.F."/>
            <person name="Seuanez H.N."/>
            <person name="Silva D.W."/>
            <person name="Silva R."/>
            <person name="Silva S.C."/>
            <person name="Soares C.M.A."/>
            <person name="Souza K.R.L."/>
            <person name="Souza R.C."/>
            <person name="Staats C.C."/>
            <person name="Steffens M.B.R."/>
            <person name="Teixeira S.M.R."/>
            <person name="Urmenyi T.P."/>
            <person name="Vainstein M.H."/>
            <person name="Zuccherato L.W."/>
            <person name="Simpson A.J.G."/>
            <person name="Zaha A."/>
        </authorList>
    </citation>
    <scope>NUCLEOTIDE SEQUENCE [LARGE SCALE GENOMIC DNA]</scope>
    <source>
        <strain>7448</strain>
    </source>
</reference>
<proteinExistence type="inferred from homology"/>
<name>RL34_MESH7</name>
<keyword id="KW-0687">Ribonucleoprotein</keyword>
<keyword id="KW-0689">Ribosomal protein</keyword>
<accession>Q4A749</accession>